<gene>
    <name evidence="1" type="primary">purM</name>
    <name type="ordered locus">SPT_0086</name>
</gene>
<name>PUR5_STRZT</name>
<organism>
    <name type="scientific">Streptococcus pneumoniae (strain Taiwan19F-14)</name>
    <dbReference type="NCBI Taxonomy" id="487213"/>
    <lineage>
        <taxon>Bacteria</taxon>
        <taxon>Bacillati</taxon>
        <taxon>Bacillota</taxon>
        <taxon>Bacilli</taxon>
        <taxon>Lactobacillales</taxon>
        <taxon>Streptococcaceae</taxon>
        <taxon>Streptococcus</taxon>
    </lineage>
</organism>
<sequence>MTNKNAYAQSGVDVEAGYEVVERIKKHVARTERAGVMGALGGFGGMFDLSKTGVKEPVLISGTDGVGTKLMLAIKYDKHDTIGQDCVAMCVNDIIAAGAEPLYFLDYVATGKNEPAKLEQVVAGVAEGCVQAGAALIGGETAEMPGMYGEDDYDLAGFAVGVAEKSQIIDGSKVVEGDVLLGLASSGLHSNGYSLVRRVFADYTGEEVLPELEGKKLKEVLLEPTRIYVKAVLPLIKEELVNGIAHITGGGFIENVPRMFADDLAAEIDESKVPVLPIFKALEKYGQIKHEEMFEIFNMGVGLMLAVSPENVERVKELLDEAVYEIGRIVKKENESVIIK</sequence>
<protein>
    <recommendedName>
        <fullName evidence="1">Phosphoribosylformylglycinamidine cyclo-ligase</fullName>
        <ecNumber evidence="1">6.3.3.1</ecNumber>
    </recommendedName>
    <alternativeName>
        <fullName evidence="1">AIR synthase</fullName>
    </alternativeName>
    <alternativeName>
        <fullName evidence="1">AIRS</fullName>
    </alternativeName>
    <alternativeName>
        <fullName evidence="1">Phosphoribosyl-aminoimidazole synthetase</fullName>
    </alternativeName>
</protein>
<evidence type="ECO:0000255" key="1">
    <source>
        <dbReference type="HAMAP-Rule" id="MF_00741"/>
    </source>
</evidence>
<accession>C1CNS6</accession>
<dbReference type="EC" id="6.3.3.1" evidence="1"/>
<dbReference type="EMBL" id="CP000921">
    <property type="protein sequence ID" value="ACO22289.1"/>
    <property type="molecule type" value="Genomic_DNA"/>
</dbReference>
<dbReference type="RefSeq" id="WP_000182580.1">
    <property type="nucleotide sequence ID" value="NC_012469.1"/>
</dbReference>
<dbReference type="SMR" id="C1CNS6"/>
<dbReference type="KEGG" id="snt:SPT_0086"/>
<dbReference type="HOGENOM" id="CLU_047116_0_0_9"/>
<dbReference type="UniPathway" id="UPA00074">
    <property type="reaction ID" value="UER00129"/>
</dbReference>
<dbReference type="GO" id="GO:0005829">
    <property type="term" value="C:cytosol"/>
    <property type="evidence" value="ECO:0007669"/>
    <property type="project" value="TreeGrafter"/>
</dbReference>
<dbReference type="GO" id="GO:0005524">
    <property type="term" value="F:ATP binding"/>
    <property type="evidence" value="ECO:0007669"/>
    <property type="project" value="UniProtKB-KW"/>
</dbReference>
<dbReference type="GO" id="GO:0004637">
    <property type="term" value="F:phosphoribosylamine-glycine ligase activity"/>
    <property type="evidence" value="ECO:0007669"/>
    <property type="project" value="TreeGrafter"/>
</dbReference>
<dbReference type="GO" id="GO:0004641">
    <property type="term" value="F:phosphoribosylformylglycinamidine cyclo-ligase activity"/>
    <property type="evidence" value="ECO:0007669"/>
    <property type="project" value="UniProtKB-UniRule"/>
</dbReference>
<dbReference type="GO" id="GO:0006189">
    <property type="term" value="P:'de novo' IMP biosynthetic process"/>
    <property type="evidence" value="ECO:0007669"/>
    <property type="project" value="UniProtKB-UniRule"/>
</dbReference>
<dbReference type="GO" id="GO:0046084">
    <property type="term" value="P:adenine biosynthetic process"/>
    <property type="evidence" value="ECO:0007669"/>
    <property type="project" value="TreeGrafter"/>
</dbReference>
<dbReference type="CDD" id="cd02196">
    <property type="entry name" value="PurM"/>
    <property type="match status" value="1"/>
</dbReference>
<dbReference type="FunFam" id="3.30.1330.10:FF:000001">
    <property type="entry name" value="Phosphoribosylformylglycinamidine cyclo-ligase"/>
    <property type="match status" value="1"/>
</dbReference>
<dbReference type="FunFam" id="3.90.650.10:FF:000011">
    <property type="entry name" value="Phosphoribosylformylglycinamidine cyclo-ligase"/>
    <property type="match status" value="1"/>
</dbReference>
<dbReference type="Gene3D" id="3.90.650.10">
    <property type="entry name" value="PurM-like C-terminal domain"/>
    <property type="match status" value="1"/>
</dbReference>
<dbReference type="Gene3D" id="3.30.1330.10">
    <property type="entry name" value="PurM-like, N-terminal domain"/>
    <property type="match status" value="1"/>
</dbReference>
<dbReference type="HAMAP" id="MF_00741">
    <property type="entry name" value="AIRS"/>
    <property type="match status" value="1"/>
</dbReference>
<dbReference type="InterPro" id="IPR010918">
    <property type="entry name" value="PurM-like_C_dom"/>
</dbReference>
<dbReference type="InterPro" id="IPR036676">
    <property type="entry name" value="PurM-like_C_sf"/>
</dbReference>
<dbReference type="InterPro" id="IPR016188">
    <property type="entry name" value="PurM-like_N"/>
</dbReference>
<dbReference type="InterPro" id="IPR036921">
    <property type="entry name" value="PurM-like_N_sf"/>
</dbReference>
<dbReference type="InterPro" id="IPR004733">
    <property type="entry name" value="PurM_cligase"/>
</dbReference>
<dbReference type="NCBIfam" id="TIGR00878">
    <property type="entry name" value="purM"/>
    <property type="match status" value="1"/>
</dbReference>
<dbReference type="PANTHER" id="PTHR10520:SF12">
    <property type="entry name" value="TRIFUNCTIONAL PURINE BIOSYNTHETIC PROTEIN ADENOSINE-3"/>
    <property type="match status" value="1"/>
</dbReference>
<dbReference type="PANTHER" id="PTHR10520">
    <property type="entry name" value="TRIFUNCTIONAL PURINE BIOSYNTHETIC PROTEIN ADENOSINE-3-RELATED"/>
    <property type="match status" value="1"/>
</dbReference>
<dbReference type="Pfam" id="PF00586">
    <property type="entry name" value="AIRS"/>
    <property type="match status" value="1"/>
</dbReference>
<dbReference type="Pfam" id="PF02769">
    <property type="entry name" value="AIRS_C"/>
    <property type="match status" value="1"/>
</dbReference>
<dbReference type="SUPFAM" id="SSF56042">
    <property type="entry name" value="PurM C-terminal domain-like"/>
    <property type="match status" value="1"/>
</dbReference>
<dbReference type="SUPFAM" id="SSF55326">
    <property type="entry name" value="PurM N-terminal domain-like"/>
    <property type="match status" value="1"/>
</dbReference>
<feature type="chain" id="PRO_1000148304" description="Phosphoribosylformylglycinamidine cyclo-ligase">
    <location>
        <begin position="1"/>
        <end position="340"/>
    </location>
</feature>
<keyword id="KW-0067">ATP-binding</keyword>
<keyword id="KW-0963">Cytoplasm</keyword>
<keyword id="KW-0436">Ligase</keyword>
<keyword id="KW-0547">Nucleotide-binding</keyword>
<keyword id="KW-0658">Purine biosynthesis</keyword>
<proteinExistence type="inferred from homology"/>
<reference key="1">
    <citation type="journal article" date="2010" name="Genome Biol.">
        <title>Structure and dynamics of the pan-genome of Streptococcus pneumoniae and closely related species.</title>
        <authorList>
            <person name="Donati C."/>
            <person name="Hiller N.L."/>
            <person name="Tettelin H."/>
            <person name="Muzzi A."/>
            <person name="Croucher N.J."/>
            <person name="Angiuoli S.V."/>
            <person name="Oggioni M."/>
            <person name="Dunning Hotopp J.C."/>
            <person name="Hu F.Z."/>
            <person name="Riley D.R."/>
            <person name="Covacci A."/>
            <person name="Mitchell T.J."/>
            <person name="Bentley S.D."/>
            <person name="Kilian M."/>
            <person name="Ehrlich G.D."/>
            <person name="Rappuoli R."/>
            <person name="Moxon E.R."/>
            <person name="Masignani V."/>
        </authorList>
    </citation>
    <scope>NUCLEOTIDE SEQUENCE [LARGE SCALE GENOMIC DNA]</scope>
    <source>
        <strain>Taiwan19F-14</strain>
    </source>
</reference>
<comment type="catalytic activity">
    <reaction evidence="1">
        <text>2-formamido-N(1)-(5-O-phospho-beta-D-ribosyl)acetamidine + ATP = 5-amino-1-(5-phospho-beta-D-ribosyl)imidazole + ADP + phosphate + H(+)</text>
        <dbReference type="Rhea" id="RHEA:23032"/>
        <dbReference type="ChEBI" id="CHEBI:15378"/>
        <dbReference type="ChEBI" id="CHEBI:30616"/>
        <dbReference type="ChEBI" id="CHEBI:43474"/>
        <dbReference type="ChEBI" id="CHEBI:137981"/>
        <dbReference type="ChEBI" id="CHEBI:147287"/>
        <dbReference type="ChEBI" id="CHEBI:456216"/>
        <dbReference type="EC" id="6.3.3.1"/>
    </reaction>
</comment>
<comment type="pathway">
    <text evidence="1">Purine metabolism; IMP biosynthesis via de novo pathway; 5-amino-1-(5-phospho-D-ribosyl)imidazole from N(2)-formyl-N(1)-(5-phospho-D-ribosyl)glycinamide: step 2/2.</text>
</comment>
<comment type="subcellular location">
    <subcellularLocation>
        <location evidence="1">Cytoplasm</location>
    </subcellularLocation>
</comment>
<comment type="similarity">
    <text evidence="1">Belongs to the AIR synthase family.</text>
</comment>